<reference key="1">
    <citation type="journal article" date="1996" name="Dev. Dyn.">
        <title>Expression of avian glypican is developmentally regulated.</title>
        <authorList>
            <person name="Shi N."/>
            <person name="Antin P.B."/>
            <person name="Akimoto K."/>
            <person name="Morkin E."/>
        </authorList>
    </citation>
    <scope>NUCLEOTIDE SEQUENCE [GENOMIC DNA]</scope>
    <scope>DEVELOPMENTAL STAGE</scope>
    <source>
        <tissue>Heart</tissue>
    </source>
</reference>
<keyword id="KW-1003">Cell membrane</keyword>
<keyword id="KW-1015">Disulfide bond</keyword>
<keyword id="KW-0967">Endosome</keyword>
<keyword id="KW-0325">Glycoprotein</keyword>
<keyword id="KW-0336">GPI-anchor</keyword>
<keyword id="KW-0357">Heparan sulfate</keyword>
<keyword id="KW-0449">Lipoprotein</keyword>
<keyword id="KW-0472">Membrane</keyword>
<keyword id="KW-0654">Proteoglycan</keyword>
<keyword id="KW-1185">Reference proteome</keyword>
<keyword id="KW-0964">Secreted</keyword>
<keyword id="KW-0732">Signal</keyword>
<proteinExistence type="evidence at transcript level"/>
<organism>
    <name type="scientific">Gallus gallus</name>
    <name type="common">Chicken</name>
    <dbReference type="NCBI Taxonomy" id="9031"/>
    <lineage>
        <taxon>Eukaryota</taxon>
        <taxon>Metazoa</taxon>
        <taxon>Chordata</taxon>
        <taxon>Craniata</taxon>
        <taxon>Vertebrata</taxon>
        <taxon>Euteleostomi</taxon>
        <taxon>Archelosauria</taxon>
        <taxon>Archosauria</taxon>
        <taxon>Dinosauria</taxon>
        <taxon>Saurischia</taxon>
        <taxon>Theropoda</taxon>
        <taxon>Coelurosauria</taxon>
        <taxon>Aves</taxon>
        <taxon>Neognathae</taxon>
        <taxon>Galloanserae</taxon>
        <taxon>Galliformes</taxon>
        <taxon>Phasianidae</taxon>
        <taxon>Phasianinae</taxon>
        <taxon>Gallus</taxon>
    </lineage>
</organism>
<name>GPC1_CHICK</name>
<evidence type="ECO:0000250" key="1"/>
<evidence type="ECO:0000255" key="2"/>
<evidence type="ECO:0000256" key="3">
    <source>
        <dbReference type="SAM" id="MobiDB-lite"/>
    </source>
</evidence>
<evidence type="ECO:0000269" key="4">
    <source>
    </source>
</evidence>
<evidence type="ECO:0000305" key="5"/>
<sequence>MRFFPWGFWLLCVASAPARGDSGSKARSCAEVRQLYGAKGFSLNGVPQAEISGEHLRICPQGYTCCTSEMEENFANKSRSEFEAMMKEAGRSVQTILTAQYKSFDNYFQDLLNKSEKALYDTFPSLYGDLYTQNMKVFKDLYSELRRYYRGSNINLEEALNEFWTRLLERLFKLMNAQYHITDEYLDCMVKHAEQHKPFGEVPRDLKVKATRAFIVARSYAQGFLVGSDVVKKVSQVSLSHECTRAVMKLMYCPHCRGMASVKPCSNYCLNVVKGCLANQADLNTEWKYLMDALVAVADRIDGPYNVDTVIGTIHMRISEAISNLQENKVSITAKVFQGCGNPKVSMKGSSSEDKKRRGKVTLEAKSSAVALEMLVLDAKGNLTALKSYWVTLPGVLCSKKIMASPAEDDKCWNGMTKGSYLPEVMGGGLANQINNPEVEVDITKPDMTIRQQIMQLKIMTNRLGNANIGNDVDFQDASDDMSGSGSGDSCPDDVCVKRLSKSPSTRQPETHAIPKQSGHGVIGASSRSLPSAFLLFLSGASIVVQHLWR</sequence>
<feature type="signal peptide" evidence="2">
    <location>
        <begin position="1"/>
        <end position="20"/>
    </location>
</feature>
<feature type="chain" id="PRO_0000012301" description="Glypican-1">
    <location>
        <begin position="21"/>
        <end position="524"/>
    </location>
</feature>
<feature type="chain" id="PRO_0000333840" description="Secreted glypican-1">
    <location>
        <begin position="21"/>
        <end status="unknown"/>
    </location>
</feature>
<feature type="propeptide" id="PRO_0000012302" description="Removed in mature form" evidence="2">
    <location>
        <begin position="525"/>
        <end position="550"/>
    </location>
</feature>
<feature type="region of interest" description="Disordered" evidence="3">
    <location>
        <begin position="475"/>
        <end position="494"/>
    </location>
</feature>
<feature type="region of interest" description="Disordered" evidence="3">
    <location>
        <begin position="502"/>
        <end position="522"/>
    </location>
</feature>
<feature type="compositionally biased region" description="Low complexity" evidence="3">
    <location>
        <begin position="481"/>
        <end position="494"/>
    </location>
</feature>
<feature type="lipid moiety-binding region" description="GPI-anchor amidated glycine" evidence="2">
    <location>
        <position position="524"/>
    </location>
</feature>
<feature type="glycosylation site" description="N-linked (GlcNAc...) asparagine" evidence="2">
    <location>
        <position position="76"/>
    </location>
</feature>
<feature type="glycosylation site" description="N-linked (GlcNAc...) asparagine" evidence="2">
    <location>
        <position position="113"/>
    </location>
</feature>
<feature type="glycosylation site" description="N-linked (GlcNAc...) asparagine" evidence="2">
    <location>
        <position position="382"/>
    </location>
</feature>
<feature type="glycosylation site" description="O-linked (Xyl...) (heparan sulfate) serine" evidence="2">
    <location>
        <position position="483"/>
    </location>
</feature>
<feature type="glycosylation site" description="O-linked (Xyl...) (heparan sulfate) serine" evidence="2">
    <location>
        <position position="485"/>
    </location>
</feature>
<feature type="glycosylation site" description="O-linked (Xyl...) (heparan sulfate) serine" evidence="2">
    <location>
        <position position="487"/>
    </location>
</feature>
<feature type="disulfide bond" evidence="1">
    <location>
        <begin position="29"/>
        <end position="65"/>
    </location>
</feature>
<feature type="disulfide bond" evidence="1">
    <location>
        <begin position="59"/>
        <end position="253"/>
    </location>
</feature>
<feature type="disulfide bond" evidence="1">
    <location>
        <begin position="66"/>
        <end position="256"/>
    </location>
</feature>
<feature type="disulfide bond" evidence="1">
    <location>
        <begin position="188"/>
        <end position="340"/>
    </location>
</feature>
<feature type="disulfide bond" evidence="1">
    <location>
        <begin position="243"/>
        <end position="276"/>
    </location>
</feature>
<feature type="disulfide bond" evidence="1">
    <location>
        <begin position="265"/>
        <end position="412"/>
    </location>
</feature>
<feature type="disulfide bond" evidence="1">
    <location>
        <begin position="269"/>
        <end position="398"/>
    </location>
</feature>
<gene>
    <name type="primary">GPC1</name>
</gene>
<protein>
    <recommendedName>
        <fullName>Glypican-1</fullName>
    </recommendedName>
    <alternativeName>
        <fullName>Heparan sulfate proteoglycan core protein</fullName>
    </alternativeName>
    <component>
        <recommendedName>
            <fullName>Secreted glypican-1</fullName>
        </recommendedName>
    </component>
</protein>
<accession>P50593</accession>
<dbReference type="EMBL" id="L29089">
    <property type="protein sequence ID" value="AAA65199.1"/>
    <property type="status" value="ALT_INIT"/>
    <property type="molecule type" value="Genomic_DNA"/>
</dbReference>
<dbReference type="SMR" id="P50593"/>
<dbReference type="FunCoup" id="P50593">
    <property type="interactions" value="431"/>
</dbReference>
<dbReference type="STRING" id="9031.ENSGALP00000047684"/>
<dbReference type="GlyCosmos" id="P50593">
    <property type="glycosylation" value="6 sites, No reported glycans"/>
</dbReference>
<dbReference type="GlyGen" id="P50593">
    <property type="glycosylation" value="6 sites"/>
</dbReference>
<dbReference type="PaxDb" id="9031-ENSGALP00000003684"/>
<dbReference type="VEuPathDB" id="HostDB:geneid_424770"/>
<dbReference type="eggNOG" id="KOG3821">
    <property type="taxonomic scope" value="Eukaryota"/>
</dbReference>
<dbReference type="InParanoid" id="P50593"/>
<dbReference type="OrthoDB" id="10010764at2759"/>
<dbReference type="PhylomeDB" id="P50593"/>
<dbReference type="Proteomes" id="UP000000539">
    <property type="component" value="Unassembled WGS sequence"/>
</dbReference>
<dbReference type="GO" id="GO:0009986">
    <property type="term" value="C:cell surface"/>
    <property type="evidence" value="ECO:0000318"/>
    <property type="project" value="GO_Central"/>
</dbReference>
<dbReference type="GO" id="GO:0005768">
    <property type="term" value="C:endosome"/>
    <property type="evidence" value="ECO:0007669"/>
    <property type="project" value="UniProtKB-SubCell"/>
</dbReference>
<dbReference type="GO" id="GO:0005576">
    <property type="term" value="C:extracellular region"/>
    <property type="evidence" value="ECO:0007669"/>
    <property type="project" value="UniProtKB-SubCell"/>
</dbReference>
<dbReference type="GO" id="GO:0005886">
    <property type="term" value="C:plasma membrane"/>
    <property type="evidence" value="ECO:0007669"/>
    <property type="project" value="UniProtKB-SubCell"/>
</dbReference>
<dbReference type="GO" id="GO:0098552">
    <property type="term" value="C:side of membrane"/>
    <property type="evidence" value="ECO:0007669"/>
    <property type="project" value="UniProtKB-KW"/>
</dbReference>
<dbReference type="GO" id="GO:0045202">
    <property type="term" value="C:synapse"/>
    <property type="evidence" value="ECO:0000318"/>
    <property type="project" value="GO_Central"/>
</dbReference>
<dbReference type="GO" id="GO:0017134">
    <property type="term" value="F:fibroblast growth factor binding"/>
    <property type="evidence" value="ECO:0000318"/>
    <property type="project" value="GO_Central"/>
</dbReference>
<dbReference type="GO" id="GO:0016477">
    <property type="term" value="P:cell migration"/>
    <property type="evidence" value="ECO:0000318"/>
    <property type="project" value="GO_Central"/>
</dbReference>
<dbReference type="GO" id="GO:0040037">
    <property type="term" value="P:negative regulation of fibroblast growth factor receptor signaling pathway"/>
    <property type="evidence" value="ECO:0000318"/>
    <property type="project" value="GO_Central"/>
</dbReference>
<dbReference type="GO" id="GO:1902725">
    <property type="term" value="P:negative regulation of satellite cell differentiation"/>
    <property type="evidence" value="ECO:0000250"/>
    <property type="project" value="AgBase"/>
</dbReference>
<dbReference type="GO" id="GO:1902723">
    <property type="term" value="P:negative regulation of skeletal muscle satellite cell proliferation"/>
    <property type="evidence" value="ECO:0000250"/>
    <property type="project" value="AgBase"/>
</dbReference>
<dbReference type="GO" id="GO:1902726">
    <property type="term" value="P:positive regulation of skeletal muscle satellite cell differentiation"/>
    <property type="evidence" value="ECO:0000250"/>
    <property type="project" value="AgBase"/>
</dbReference>
<dbReference type="GO" id="GO:1902724">
    <property type="term" value="P:positive regulation of skeletal muscle satellite cell proliferation"/>
    <property type="evidence" value="ECO:0000250"/>
    <property type="project" value="AgBase"/>
</dbReference>
<dbReference type="GO" id="GO:1905475">
    <property type="term" value="P:regulation of protein localization to membrane"/>
    <property type="evidence" value="ECO:0000318"/>
    <property type="project" value="GO_Central"/>
</dbReference>
<dbReference type="InterPro" id="IPR001863">
    <property type="entry name" value="Glypican"/>
</dbReference>
<dbReference type="InterPro" id="IPR019803">
    <property type="entry name" value="Glypican_CS"/>
</dbReference>
<dbReference type="PANTHER" id="PTHR10822">
    <property type="entry name" value="GLYPICAN"/>
    <property type="match status" value="1"/>
</dbReference>
<dbReference type="PANTHER" id="PTHR10822:SF8">
    <property type="entry name" value="GLYPICAN-1"/>
    <property type="match status" value="1"/>
</dbReference>
<dbReference type="Pfam" id="PF01153">
    <property type="entry name" value="Glypican"/>
    <property type="match status" value="1"/>
</dbReference>
<dbReference type="PROSITE" id="PS01207">
    <property type="entry name" value="GLYPICAN"/>
    <property type="match status" value="1"/>
</dbReference>
<comment type="function">
    <text>Cell surface proteoglycan that bears heparan sulfate. Modulates Wnt-signaling pathway.</text>
</comment>
<comment type="subcellular location">
    <subcellularLocation>
        <location evidence="1">Cell membrane</location>
        <topology evidence="1">Lipid-anchor</topology>
        <topology evidence="1">GPI-anchor</topology>
        <orientation evidence="1">Extracellular side</orientation>
    </subcellularLocation>
    <subcellularLocation>
        <location evidence="1">Endosome</location>
    </subcellularLocation>
</comment>
<comment type="subcellular location">
    <molecule>Secreted glypican-1</molecule>
    <subcellularLocation>
        <location evidence="1">Secreted</location>
        <location evidence="1">Extracellular space</location>
    </subcellularLocation>
</comment>
<comment type="developmental stage">
    <text evidence="4">Expressed at stage 7 of embryonic development in the folding anterior part of the neural plate. At stage 8, high levels in all four newly formed epithelial somites and in the rostra1 paraxial mesoderm. Expressed also in the cephlic region of the developing neural fold. Later expression in the entire limb bud, including mesenchyme and ectoderm. In the developing brain, first detected at stage 7 in the anterior portion of the neural folds that are destined to give rise to the telencephalon. Later in development (stage 25), glypican transcripts were found in postmitotic cells in the mantle zone. Expressed by ectodermal and ingressing chick trigeminal placode cells at the time they differentiate into neurons and assemble into ganglia. Also expressed in the migrating hindbrain neural crest cells from rhombomeres 4 and 6 during migration at stage 12.</text>
</comment>
<comment type="PTM">
    <text evidence="1">O-glycosylated with heparan sulfate.</text>
</comment>
<comment type="similarity">
    <text evidence="5">Belongs to the glypican family.</text>
</comment>
<comment type="sequence caution" evidence="5">
    <conflict type="erroneous initiation">
        <sequence resource="EMBL-CDS" id="AAA65199"/>
    </conflict>
    <text>Truncated N-terminus.</text>
</comment>